<proteinExistence type="inferred from homology"/>
<reference key="1">
    <citation type="journal article" date="1996" name="J. Mol. Evol.">
        <title>The tryptophan biosynthetic pathway of aphid endosymbionts (Buchnera): genetics and evolution of plasmid-associated anthranilate synthase (trpEG) within the aphididae.</title>
        <authorList>
            <person name="Rouhbakhsh D."/>
            <person name="Lai C.-Y."/>
            <person name="von Dohlen C.D."/>
            <person name="Clark M.A."/>
            <person name="Baumann L."/>
            <person name="Baumann P."/>
            <person name="Moran N.A."/>
            <person name="Voegtlin D.J."/>
        </authorList>
    </citation>
    <scope>NUCLEOTIDE SEQUENCE [GENOMIC DNA]</scope>
</reference>
<reference key="2">
    <citation type="journal article" date="2000" name="Nature">
        <title>Genome sequence of the endocellular bacterial symbiont of aphids Buchnera sp. APS.</title>
        <authorList>
            <person name="Shigenobu S."/>
            <person name="Watanabe H."/>
            <person name="Hattori M."/>
            <person name="Sakaki Y."/>
            <person name="Ishikawa H."/>
        </authorList>
    </citation>
    <scope>NUCLEOTIDE SEQUENCE [LARGE SCALE GENOMIC DNA]</scope>
    <source>
        <strain>APS</strain>
    </source>
</reference>
<dbReference type="EC" id="4.1.3.27"/>
<dbReference type="EMBL" id="L43555">
    <property type="protein sequence ID" value="AAD09346.1"/>
    <property type="molecule type" value="Genomic_DNA"/>
</dbReference>
<dbReference type="EMBL" id="AP001070">
    <property type="protein sequence ID" value="BAA95417.1"/>
    <property type="molecule type" value="Genomic_DNA"/>
</dbReference>
<dbReference type="RefSeq" id="NP_057962.1">
    <property type="nucleotide sequence ID" value="NC_002252.1"/>
</dbReference>
<dbReference type="RefSeq" id="WP_010892289.1">
    <property type="nucleotide sequence ID" value="NC_002252.1"/>
</dbReference>
<dbReference type="SMR" id="Q44695"/>
<dbReference type="EnsemblBacteria" id="BAA95417">
    <property type="protein sequence ID" value="BAA95417"/>
    <property type="gene ID" value="BAA95417"/>
</dbReference>
<dbReference type="KEGG" id="buc:BUpT01"/>
<dbReference type="PATRIC" id="fig|107806.10.peg.1"/>
<dbReference type="eggNOG" id="COG0147">
    <property type="taxonomic scope" value="Bacteria"/>
</dbReference>
<dbReference type="HOGENOM" id="CLU_006493_9_4_6"/>
<dbReference type="UniPathway" id="UPA00035">
    <property type="reaction ID" value="UER00040"/>
</dbReference>
<dbReference type="Proteomes" id="UP000001806">
    <property type="component" value="Plasmid pTrp"/>
</dbReference>
<dbReference type="GO" id="GO:0004049">
    <property type="term" value="F:anthranilate synthase activity"/>
    <property type="evidence" value="ECO:0007669"/>
    <property type="project" value="UniProtKB-EC"/>
</dbReference>
<dbReference type="GO" id="GO:0046872">
    <property type="term" value="F:metal ion binding"/>
    <property type="evidence" value="ECO:0007669"/>
    <property type="project" value="UniProtKB-KW"/>
</dbReference>
<dbReference type="GO" id="GO:0000162">
    <property type="term" value="P:L-tryptophan biosynthetic process"/>
    <property type="evidence" value="ECO:0007669"/>
    <property type="project" value="UniProtKB-UniPathway"/>
</dbReference>
<dbReference type="Gene3D" id="3.60.120.10">
    <property type="entry name" value="Anthranilate synthase"/>
    <property type="match status" value="1"/>
</dbReference>
<dbReference type="InterPro" id="IPR005801">
    <property type="entry name" value="ADC_synthase"/>
</dbReference>
<dbReference type="InterPro" id="IPR019999">
    <property type="entry name" value="Anth_synth_I-like"/>
</dbReference>
<dbReference type="InterPro" id="IPR006805">
    <property type="entry name" value="Anth_synth_I_N"/>
</dbReference>
<dbReference type="InterPro" id="IPR005257">
    <property type="entry name" value="Anth_synth_I_TrpE"/>
</dbReference>
<dbReference type="InterPro" id="IPR015890">
    <property type="entry name" value="Chorismate_C"/>
</dbReference>
<dbReference type="NCBIfam" id="NF010079">
    <property type="entry name" value="PRK13564.1"/>
    <property type="match status" value="1"/>
</dbReference>
<dbReference type="NCBIfam" id="TIGR00565">
    <property type="entry name" value="trpE_proteo"/>
    <property type="match status" value="1"/>
</dbReference>
<dbReference type="PANTHER" id="PTHR11236">
    <property type="entry name" value="AMINOBENZOATE/ANTHRANILATE SYNTHASE"/>
    <property type="match status" value="1"/>
</dbReference>
<dbReference type="PANTHER" id="PTHR11236:SF49">
    <property type="entry name" value="ANTHRANILATE SYNTHASE COMPONENT 1"/>
    <property type="match status" value="1"/>
</dbReference>
<dbReference type="Pfam" id="PF04715">
    <property type="entry name" value="Anth_synt_I_N"/>
    <property type="match status" value="1"/>
</dbReference>
<dbReference type="Pfam" id="PF00425">
    <property type="entry name" value="Chorismate_bind"/>
    <property type="match status" value="1"/>
</dbReference>
<dbReference type="PIRSF" id="PIRSF001373">
    <property type="entry name" value="TrpE"/>
    <property type="match status" value="1"/>
</dbReference>
<dbReference type="PRINTS" id="PR00095">
    <property type="entry name" value="ANTSNTHASEI"/>
</dbReference>
<dbReference type="SUPFAM" id="SSF56322">
    <property type="entry name" value="ADC synthase"/>
    <property type="match status" value="1"/>
</dbReference>
<comment type="function">
    <text evidence="1">Part of a heterotetrameric complex that catalyzes the two-step biosynthesis of anthranilate, an intermediate in the biosynthesis of L-tryptophan. In the first step, the glutamine-binding beta subunit (TrpG) of anthranilate synthase (AS) provides the glutamine amidotransferase activity which generates ammonia as a substrate that, along with chorismate, is used in the second step, catalyzed by the large alpha subunit of AS (TrpE) to produce anthranilate. In the absence of TrpG, TrpE can synthesize anthranilate directly from chorismate and high concentrations of ammonia (By similarity).</text>
</comment>
<comment type="catalytic activity">
    <reaction>
        <text>chorismate + L-glutamine = anthranilate + pyruvate + L-glutamate + H(+)</text>
        <dbReference type="Rhea" id="RHEA:21732"/>
        <dbReference type="ChEBI" id="CHEBI:15361"/>
        <dbReference type="ChEBI" id="CHEBI:15378"/>
        <dbReference type="ChEBI" id="CHEBI:16567"/>
        <dbReference type="ChEBI" id="CHEBI:29748"/>
        <dbReference type="ChEBI" id="CHEBI:29985"/>
        <dbReference type="ChEBI" id="CHEBI:58359"/>
        <dbReference type="EC" id="4.1.3.27"/>
    </reaction>
</comment>
<comment type="cofactor">
    <cofactor evidence="2">
        <name>Mg(2+)</name>
        <dbReference type="ChEBI" id="CHEBI:18420"/>
    </cofactor>
    <text evidence="2">Binds 1 Mg(2+) ion per subunit.</text>
</comment>
<comment type="activity regulation">
    <text evidence="1">Feedback inhibited by tryptophan.</text>
</comment>
<comment type="pathway">
    <text>Amino-acid biosynthesis; L-tryptophan biosynthesis; L-tryptophan from chorismate: step 1/5.</text>
</comment>
<comment type="subunit">
    <text evidence="1">Heterotetramer consisting of two non-identical subunits: a beta subunit (TrpG) and a large alpha subunit (TrpE).</text>
</comment>
<comment type="similarity">
    <text evidence="3">Belongs to the anthranilate synthase component I family.</text>
</comment>
<keyword id="KW-0028">Amino-acid biosynthesis</keyword>
<keyword id="KW-0057">Aromatic amino acid biosynthesis</keyword>
<keyword id="KW-0456">Lyase</keyword>
<keyword id="KW-0460">Magnesium</keyword>
<keyword id="KW-0479">Metal-binding</keyword>
<keyword id="KW-0614">Plasmid</keyword>
<keyword id="KW-1185">Reference proteome</keyword>
<keyword id="KW-0822">Tryptophan biosynthesis</keyword>
<feature type="chain" id="PRO_0000154080" description="Anthranilate synthase component 1">
    <location>
        <begin position="1"/>
        <end position="521"/>
    </location>
</feature>
<feature type="binding site" evidence="2">
    <location>
        <position position="40"/>
    </location>
    <ligand>
        <name>L-tryptophan</name>
        <dbReference type="ChEBI" id="CHEBI:57912"/>
    </ligand>
</feature>
<feature type="binding site" evidence="2">
    <location>
        <begin position="292"/>
        <end position="294"/>
    </location>
    <ligand>
        <name>L-tryptophan</name>
        <dbReference type="ChEBI" id="CHEBI:57912"/>
    </ligand>
</feature>
<feature type="binding site" evidence="2">
    <location>
        <begin position="329"/>
        <end position="330"/>
    </location>
    <ligand>
        <name>chorismate</name>
        <dbReference type="ChEBI" id="CHEBI:29748"/>
    </ligand>
</feature>
<feature type="binding site" evidence="2">
    <location>
        <position position="362"/>
    </location>
    <ligand>
        <name>Mg(2+)</name>
        <dbReference type="ChEBI" id="CHEBI:18420"/>
    </ligand>
</feature>
<feature type="binding site" evidence="2">
    <location>
        <position position="450"/>
    </location>
    <ligand>
        <name>chorismate</name>
        <dbReference type="ChEBI" id="CHEBI:29748"/>
    </ligand>
</feature>
<feature type="binding site" evidence="2">
    <location>
        <position position="470"/>
    </location>
    <ligand>
        <name>chorismate</name>
        <dbReference type="ChEBI" id="CHEBI:29748"/>
    </ligand>
</feature>
<feature type="binding site" evidence="2">
    <location>
        <begin position="484"/>
        <end position="486"/>
    </location>
    <ligand>
        <name>chorismate</name>
        <dbReference type="ChEBI" id="CHEBI:29748"/>
    </ligand>
</feature>
<feature type="binding site" evidence="2">
    <location>
        <position position="486"/>
    </location>
    <ligand>
        <name>chorismate</name>
        <dbReference type="ChEBI" id="CHEBI:29748"/>
    </ligand>
</feature>
<feature type="binding site" evidence="2">
    <location>
        <position position="499"/>
    </location>
    <ligand>
        <name>Mg(2+)</name>
        <dbReference type="ChEBI" id="CHEBI:18420"/>
    </ligand>
</feature>
<feature type="sequence conflict" description="In Ref. 1; AAD09346." evidence="3" ref="1">
    <original>MFLIEKRRKL</original>
    <variation>MQKSPYEIEI</variation>
    <location>
        <begin position="1"/>
        <end position="10"/>
    </location>
</feature>
<feature type="sequence conflict" description="In Ref. 1; AAD09346." evidence="3" ref="1">
    <original>D</original>
    <variation>N</variation>
    <location>
        <position position="276"/>
    </location>
</feature>
<protein>
    <recommendedName>
        <fullName>Anthranilate synthase component 1</fullName>
        <shortName>AS</shortName>
        <shortName>ASI</shortName>
        <ecNumber>4.1.3.27</ecNumber>
    </recommendedName>
</protein>
<name>TRPE_BUCAI</name>
<organism>
    <name type="scientific">Buchnera aphidicola subsp. Acyrthosiphon pisum (strain APS)</name>
    <name type="common">Acyrthosiphon pisum symbiotic bacterium</name>
    <dbReference type="NCBI Taxonomy" id="107806"/>
    <lineage>
        <taxon>Bacteria</taxon>
        <taxon>Pseudomonadati</taxon>
        <taxon>Pseudomonadota</taxon>
        <taxon>Gammaproteobacteria</taxon>
        <taxon>Enterobacterales</taxon>
        <taxon>Erwiniaceae</taxon>
        <taxon>Buchnera</taxon>
    </lineage>
</organism>
<gene>
    <name type="primary">trpE</name>
    <name type="ordered locus">BUpT01</name>
</gene>
<sequence length="521" mass="58793">MFLIEKRRKLIQKKANYHSDPTTVFNHLCGSRPATLLLETAEVNKKNNLESIMIVDSAIRVSAVKNSVKITALSENGAEILSILKENPHKKIKFFEKNKSINLIFPSLDNNLDEDKKIFSLSVFDSFRFIMKSVNNTKRTSKAMFFGGLFSYDLISNFESLPNVKKKQKCPDFCFYLAETLLVVDHQKKTCLIQSSLFGRNVDEKNRIKKRTEEIEKKLEEKLTSIPKNKTTVPVQLTSNISDFQYSSTIKKLQKLIQKGEIFQVVPSRKFFLPCDNSLSAYQELKKSNPSPYMFFMQDEDFILFGASPESSLKYDEKNRQIELYPIAGTRPRGRKKDGTLDLDLDSRIELEMRTNHKELAEHLMLVDLARNDLARICEPGSRYVSDLVKVDKYSHVMHLVSKVVGQLKYGLDALHAYSSCMNMGTLTGAPKVRAMQLIAEYEGEGRGSYGGAIGYFTDLGNLDTCITIRSAYVESGVATIQAGAGVVFNSIPEDEVKESLNKAQAVINAIKKAHFTMGSS</sequence>
<evidence type="ECO:0000250" key="1"/>
<evidence type="ECO:0000250" key="2">
    <source>
        <dbReference type="UniProtKB" id="P00897"/>
    </source>
</evidence>
<evidence type="ECO:0000305" key="3"/>
<geneLocation type="plasmid">
    <name>pTrp</name>
    <name>pBAp</name>
</geneLocation>
<accession>Q44695</accession>
<accession>Q9KGQ2</accession>